<reference key="1">
    <citation type="submission" date="2007-09" db="EMBL/GenBank/DDBJ databases">
        <title>Status of mRNA editing and SL RNA trans-splicing groups Oxyrrhis, Noctiluca, Heterocapsa, and Amphidinium as basal lineages of dinoflagellates.</title>
        <authorList>
            <person name="Zhang H."/>
            <person name="Lin S."/>
        </authorList>
    </citation>
    <scope>NUCLEOTIDE SEQUENCE [MRNA]</scope>
    <source>
        <strain>CCMP449</strain>
    </source>
</reference>
<evidence type="ECO:0000250" key="1"/>
<evidence type="ECO:0000255" key="2">
    <source>
        <dbReference type="PROSITE-ProRule" id="PRU00448"/>
    </source>
</evidence>
<evidence type="ECO:0000305" key="3"/>
<dbReference type="EMBL" id="EU153195">
    <property type="protein sequence ID" value="ABV72535.1"/>
    <property type="molecule type" value="mRNA"/>
</dbReference>
<dbReference type="SMR" id="A8I1Q0"/>
<dbReference type="GO" id="GO:0016460">
    <property type="term" value="C:myosin II complex"/>
    <property type="evidence" value="ECO:0007669"/>
    <property type="project" value="TreeGrafter"/>
</dbReference>
<dbReference type="GO" id="GO:0005509">
    <property type="term" value="F:calcium ion binding"/>
    <property type="evidence" value="ECO:0007669"/>
    <property type="project" value="InterPro"/>
</dbReference>
<dbReference type="CDD" id="cd00051">
    <property type="entry name" value="EFh"/>
    <property type="match status" value="2"/>
</dbReference>
<dbReference type="FunFam" id="1.10.238.10:FF:000034">
    <property type="entry name" value="Calmodulin"/>
    <property type="match status" value="1"/>
</dbReference>
<dbReference type="FunFam" id="1.10.238.10:FF:000042">
    <property type="entry name" value="Calmodulin"/>
    <property type="match status" value="1"/>
</dbReference>
<dbReference type="Gene3D" id="1.10.238.10">
    <property type="entry name" value="EF-hand"/>
    <property type="match status" value="3"/>
</dbReference>
<dbReference type="InterPro" id="IPR050230">
    <property type="entry name" value="CALM/Myosin/TropC-like"/>
</dbReference>
<dbReference type="InterPro" id="IPR011992">
    <property type="entry name" value="EF-hand-dom_pair"/>
</dbReference>
<dbReference type="InterPro" id="IPR018247">
    <property type="entry name" value="EF_Hand_1_Ca_BS"/>
</dbReference>
<dbReference type="InterPro" id="IPR002048">
    <property type="entry name" value="EF_hand_dom"/>
</dbReference>
<dbReference type="PANTHER" id="PTHR23048:SF0">
    <property type="entry name" value="CALMODULIN LIKE 3"/>
    <property type="match status" value="1"/>
</dbReference>
<dbReference type="PANTHER" id="PTHR23048">
    <property type="entry name" value="MYOSIN LIGHT CHAIN 1, 3"/>
    <property type="match status" value="1"/>
</dbReference>
<dbReference type="Pfam" id="PF13499">
    <property type="entry name" value="EF-hand_7"/>
    <property type="match status" value="2"/>
</dbReference>
<dbReference type="SMART" id="SM00054">
    <property type="entry name" value="EFh"/>
    <property type="match status" value="4"/>
</dbReference>
<dbReference type="SMART" id="SM01184">
    <property type="entry name" value="efhand_Ca_insen"/>
    <property type="match status" value="1"/>
</dbReference>
<dbReference type="SUPFAM" id="SSF47473">
    <property type="entry name" value="EF-hand"/>
    <property type="match status" value="1"/>
</dbReference>
<dbReference type="PROSITE" id="PS00018">
    <property type="entry name" value="EF_HAND_1"/>
    <property type="match status" value="4"/>
</dbReference>
<dbReference type="PROSITE" id="PS50222">
    <property type="entry name" value="EF_HAND_2"/>
    <property type="match status" value="4"/>
</dbReference>
<proteinExistence type="evidence at transcript level"/>
<keyword id="KW-0007">Acetylation</keyword>
<keyword id="KW-0106">Calcium</keyword>
<keyword id="KW-0479">Metal-binding</keyword>
<keyword id="KW-0488">Methylation</keyword>
<keyword id="KW-0677">Repeat</keyword>
<sequence>MADQLTEEQIAEFKEAFSLFDKDGDGTITTKELGTVMRSLGQNPTEAELQDMINEVDSDGNGTIDFPEFLSLMARKMKDTDTEEELIEAFKVFDRDGNGFISAAELRHVMTNLGEKLTDEEVDEMIREADVDGDGQINYEEFVKMMMAK</sequence>
<accession>A8I1Q0</accession>
<protein>
    <recommendedName>
        <fullName>Calmodulin</fullName>
        <shortName>CaM</shortName>
    </recommendedName>
</protein>
<comment type="function">
    <text>Calmodulin mediates the control of a large number of enzymes, ion channels and other proteins by Ca(2+). Among the enzymes to be stimulated by the calmodulin-Ca(2+) complex are a number of protein kinases and phosphatases.</text>
</comment>
<comment type="miscellaneous">
    <text>This protein has four functional calcium-binding sites.</text>
</comment>
<comment type="similarity">
    <text evidence="3">Belongs to the calmodulin family.</text>
</comment>
<name>CALM_HETTR</name>
<feature type="initiator methionine" description="Removed" evidence="1">
    <location>
        <position position="1"/>
    </location>
</feature>
<feature type="chain" id="PRO_0000334494" description="Calmodulin">
    <location>
        <begin position="2"/>
        <end position="149"/>
    </location>
</feature>
<feature type="domain" description="EF-hand 1" evidence="2">
    <location>
        <begin position="8"/>
        <end position="43"/>
    </location>
</feature>
<feature type="domain" description="EF-hand 2" evidence="2">
    <location>
        <begin position="44"/>
        <end position="79"/>
    </location>
</feature>
<feature type="domain" description="EF-hand 3" evidence="2">
    <location>
        <begin position="81"/>
        <end position="116"/>
    </location>
</feature>
<feature type="domain" description="EF-hand 4" evidence="2">
    <location>
        <begin position="117"/>
        <end position="149"/>
    </location>
</feature>
<feature type="binding site" evidence="2">
    <location>
        <position position="21"/>
    </location>
    <ligand>
        <name>Ca(2+)</name>
        <dbReference type="ChEBI" id="CHEBI:29108"/>
        <label>1</label>
    </ligand>
</feature>
<feature type="binding site" evidence="2">
    <location>
        <position position="23"/>
    </location>
    <ligand>
        <name>Ca(2+)</name>
        <dbReference type="ChEBI" id="CHEBI:29108"/>
        <label>1</label>
    </ligand>
</feature>
<feature type="binding site" evidence="2">
    <location>
        <position position="25"/>
    </location>
    <ligand>
        <name>Ca(2+)</name>
        <dbReference type="ChEBI" id="CHEBI:29108"/>
        <label>1</label>
    </ligand>
</feature>
<feature type="binding site" evidence="2">
    <location>
        <position position="27"/>
    </location>
    <ligand>
        <name>Ca(2+)</name>
        <dbReference type="ChEBI" id="CHEBI:29108"/>
        <label>1</label>
    </ligand>
</feature>
<feature type="binding site" evidence="2">
    <location>
        <position position="32"/>
    </location>
    <ligand>
        <name>Ca(2+)</name>
        <dbReference type="ChEBI" id="CHEBI:29108"/>
        <label>1</label>
    </ligand>
</feature>
<feature type="binding site" evidence="2">
    <location>
        <position position="57"/>
    </location>
    <ligand>
        <name>Ca(2+)</name>
        <dbReference type="ChEBI" id="CHEBI:29108"/>
        <label>2</label>
    </ligand>
</feature>
<feature type="binding site" evidence="2">
    <location>
        <position position="59"/>
    </location>
    <ligand>
        <name>Ca(2+)</name>
        <dbReference type="ChEBI" id="CHEBI:29108"/>
        <label>2</label>
    </ligand>
</feature>
<feature type="binding site" evidence="2">
    <location>
        <position position="61"/>
    </location>
    <ligand>
        <name>Ca(2+)</name>
        <dbReference type="ChEBI" id="CHEBI:29108"/>
        <label>2</label>
    </ligand>
</feature>
<feature type="binding site" evidence="2">
    <location>
        <position position="63"/>
    </location>
    <ligand>
        <name>Ca(2+)</name>
        <dbReference type="ChEBI" id="CHEBI:29108"/>
        <label>2</label>
    </ligand>
</feature>
<feature type="binding site" evidence="2">
    <location>
        <position position="68"/>
    </location>
    <ligand>
        <name>Ca(2+)</name>
        <dbReference type="ChEBI" id="CHEBI:29108"/>
        <label>2</label>
    </ligand>
</feature>
<feature type="binding site" evidence="2">
    <location>
        <position position="94"/>
    </location>
    <ligand>
        <name>Ca(2+)</name>
        <dbReference type="ChEBI" id="CHEBI:29108"/>
        <label>3</label>
    </ligand>
</feature>
<feature type="binding site" evidence="2">
    <location>
        <position position="96"/>
    </location>
    <ligand>
        <name>Ca(2+)</name>
        <dbReference type="ChEBI" id="CHEBI:29108"/>
        <label>3</label>
    </ligand>
</feature>
<feature type="binding site" evidence="2">
    <location>
        <position position="98"/>
    </location>
    <ligand>
        <name>Ca(2+)</name>
        <dbReference type="ChEBI" id="CHEBI:29108"/>
        <label>3</label>
    </ligand>
</feature>
<feature type="binding site" evidence="2">
    <location>
        <position position="105"/>
    </location>
    <ligand>
        <name>Ca(2+)</name>
        <dbReference type="ChEBI" id="CHEBI:29108"/>
        <label>3</label>
    </ligand>
</feature>
<feature type="binding site" evidence="2">
    <location>
        <position position="130"/>
    </location>
    <ligand>
        <name>Ca(2+)</name>
        <dbReference type="ChEBI" id="CHEBI:29108"/>
        <label>4</label>
    </ligand>
</feature>
<feature type="binding site" evidence="2">
    <location>
        <position position="132"/>
    </location>
    <ligand>
        <name>Ca(2+)</name>
        <dbReference type="ChEBI" id="CHEBI:29108"/>
        <label>4</label>
    </ligand>
</feature>
<feature type="binding site" evidence="2">
    <location>
        <position position="134"/>
    </location>
    <ligand>
        <name>Ca(2+)</name>
        <dbReference type="ChEBI" id="CHEBI:29108"/>
        <label>4</label>
    </ligand>
</feature>
<feature type="binding site" evidence="2">
    <location>
        <position position="136"/>
    </location>
    <ligand>
        <name>Ca(2+)</name>
        <dbReference type="ChEBI" id="CHEBI:29108"/>
        <label>4</label>
    </ligand>
</feature>
<feature type="binding site" evidence="2">
    <location>
        <position position="141"/>
    </location>
    <ligand>
        <name>Ca(2+)</name>
        <dbReference type="ChEBI" id="CHEBI:29108"/>
        <label>4</label>
    </ligand>
</feature>
<feature type="modified residue" description="N-acetylalanine" evidence="1">
    <location>
        <position position="2"/>
    </location>
</feature>
<feature type="modified residue" description="N6,N6,N6-trimethyllysine" evidence="1">
    <location>
        <position position="116"/>
    </location>
</feature>
<organism>
    <name type="scientific">Heterocapsa triquetra</name>
    <name type="common">Dinoflagellate</name>
    <name type="synonym">Glenodinium triquetrum</name>
    <dbReference type="NCBI Taxonomy" id="66468"/>
    <lineage>
        <taxon>Eukaryota</taxon>
        <taxon>Sar</taxon>
        <taxon>Alveolata</taxon>
        <taxon>Dinophyceae</taxon>
        <taxon>Peridiniales</taxon>
        <taxon>Heterocapsaceae</taxon>
        <taxon>Heterocapsa</taxon>
    </lineage>
</organism>